<reference key="1">
    <citation type="journal article" date="2001" name="Lancet">
        <title>Whole genome sequencing of meticillin-resistant Staphylococcus aureus.</title>
        <authorList>
            <person name="Kuroda M."/>
            <person name="Ohta T."/>
            <person name="Uchiyama I."/>
            <person name="Baba T."/>
            <person name="Yuzawa H."/>
            <person name="Kobayashi I."/>
            <person name="Cui L."/>
            <person name="Oguchi A."/>
            <person name="Aoki K."/>
            <person name="Nagai Y."/>
            <person name="Lian J.-Q."/>
            <person name="Ito T."/>
            <person name="Kanamori M."/>
            <person name="Matsumaru H."/>
            <person name="Maruyama A."/>
            <person name="Murakami H."/>
            <person name="Hosoyama A."/>
            <person name="Mizutani-Ui Y."/>
            <person name="Takahashi N.K."/>
            <person name="Sawano T."/>
            <person name="Inoue R."/>
            <person name="Kaito C."/>
            <person name="Sekimizu K."/>
            <person name="Hirakawa H."/>
            <person name="Kuhara S."/>
            <person name="Goto S."/>
            <person name="Yabuzaki J."/>
            <person name="Kanehisa M."/>
            <person name="Yamashita A."/>
            <person name="Oshima K."/>
            <person name="Furuya K."/>
            <person name="Yoshino C."/>
            <person name="Shiba T."/>
            <person name="Hattori M."/>
            <person name="Ogasawara N."/>
            <person name="Hayashi H."/>
            <person name="Hiramatsu K."/>
        </authorList>
    </citation>
    <scope>NUCLEOTIDE SEQUENCE [LARGE SCALE GENOMIC DNA]</scope>
    <source>
        <strain>Mu50 / ATCC 700699</strain>
    </source>
</reference>
<gene>
    <name type="ordered locus">SAV0385</name>
</gene>
<keyword id="KW-0175">Coiled coil</keyword>
<protein>
    <recommendedName>
        <fullName>Uncharacterized protein SAV0385</fullName>
    </recommendedName>
</protein>
<feature type="chain" id="PRO_0000215532" description="Uncharacterized protein SAV0385">
    <location>
        <begin position="1"/>
        <end position="318"/>
    </location>
</feature>
<feature type="region of interest" description="Disordered" evidence="2">
    <location>
        <begin position="172"/>
        <end position="318"/>
    </location>
</feature>
<feature type="coiled-coil region" evidence="1">
    <location>
        <begin position="67"/>
        <end position="157"/>
    </location>
</feature>
<feature type="compositionally biased region" description="Basic and acidic residues" evidence="2">
    <location>
        <begin position="175"/>
        <end position="193"/>
    </location>
</feature>
<feature type="compositionally biased region" description="Basic and acidic residues" evidence="2">
    <location>
        <begin position="219"/>
        <end position="236"/>
    </location>
</feature>
<feature type="compositionally biased region" description="Polar residues" evidence="2">
    <location>
        <begin position="237"/>
        <end position="248"/>
    </location>
</feature>
<feature type="compositionally biased region" description="Basic and acidic residues" evidence="2">
    <location>
        <begin position="249"/>
        <end position="274"/>
    </location>
</feature>
<feature type="compositionally biased region" description="Basic and acidic residues" evidence="2">
    <location>
        <begin position="300"/>
        <end position="310"/>
    </location>
</feature>
<name>Y385_STAAM</name>
<organism>
    <name type="scientific">Staphylococcus aureus (strain Mu50 / ATCC 700699)</name>
    <dbReference type="NCBI Taxonomy" id="158878"/>
    <lineage>
        <taxon>Bacteria</taxon>
        <taxon>Bacillati</taxon>
        <taxon>Bacillota</taxon>
        <taxon>Bacilli</taxon>
        <taxon>Bacillales</taxon>
        <taxon>Staphylococcaceae</taxon>
        <taxon>Staphylococcus</taxon>
    </lineage>
</organism>
<proteinExistence type="predicted"/>
<evidence type="ECO:0000255" key="1"/>
<evidence type="ECO:0000256" key="2">
    <source>
        <dbReference type="SAM" id="MobiDB-lite"/>
    </source>
</evidence>
<dbReference type="EMBL" id="BA000017">
    <property type="protein sequence ID" value="BAB56547.1"/>
    <property type="molecule type" value="Genomic_DNA"/>
</dbReference>
<dbReference type="RefSeq" id="WP_000956137.1">
    <property type="nucleotide sequence ID" value="NC_002758.2"/>
</dbReference>
<dbReference type="SMR" id="P60854"/>
<dbReference type="KEGG" id="sav:SAV0385"/>
<dbReference type="HOGENOM" id="CLU_885403_0_0_9"/>
<dbReference type="Proteomes" id="UP000002481">
    <property type="component" value="Chromosome"/>
</dbReference>
<accession>P60854</accession>
<accession>Q99WJ4</accession>
<sequence>MLTKEFAQRVELSEKQVRKIVQHLEERGYQLSKTEYRGREATDFKEEDIELFKDIADKVKQTNSYDLAFDELEKEKDFLQVIVKNDDKNLPTNQNVAQLVEDLRLEIQKMREERHLLGQMMNQVHQQQQELKELQNQLTSKIDSNSESLKAIQTSQEAIQEAQASQAKVLAESTNKVEKNAVTEDKADSKDSKVAGVNTSTDAKTDTKAENAGDGTATKVDKEDQISATEAIEKASVEQSKNENAAETSNKEATVDADAQHDAEQQVAEAHAEASKQATSNDSLEAKAENDSTASQSEMSEPKPQEEKKGFFARLFNL</sequence>